<proteinExistence type="inferred from homology"/>
<accession>Q6G992</accession>
<reference key="1">
    <citation type="journal article" date="2004" name="Proc. Natl. Acad. Sci. U.S.A.">
        <title>Complete genomes of two clinical Staphylococcus aureus strains: evidence for the rapid evolution of virulence and drug resistance.</title>
        <authorList>
            <person name="Holden M.T.G."/>
            <person name="Feil E.J."/>
            <person name="Lindsay J.A."/>
            <person name="Peacock S.J."/>
            <person name="Day N.P.J."/>
            <person name="Enright M.C."/>
            <person name="Foster T.J."/>
            <person name="Moore C.E."/>
            <person name="Hurst L."/>
            <person name="Atkin R."/>
            <person name="Barron A."/>
            <person name="Bason N."/>
            <person name="Bentley S.D."/>
            <person name="Chillingworth C."/>
            <person name="Chillingworth T."/>
            <person name="Churcher C."/>
            <person name="Clark L."/>
            <person name="Corton C."/>
            <person name="Cronin A."/>
            <person name="Doggett J."/>
            <person name="Dowd L."/>
            <person name="Feltwell T."/>
            <person name="Hance Z."/>
            <person name="Harris B."/>
            <person name="Hauser H."/>
            <person name="Holroyd S."/>
            <person name="Jagels K."/>
            <person name="James K.D."/>
            <person name="Lennard N."/>
            <person name="Line A."/>
            <person name="Mayes R."/>
            <person name="Moule S."/>
            <person name="Mungall K."/>
            <person name="Ormond D."/>
            <person name="Quail M.A."/>
            <person name="Rabbinowitsch E."/>
            <person name="Rutherford K.M."/>
            <person name="Sanders M."/>
            <person name="Sharp S."/>
            <person name="Simmonds M."/>
            <person name="Stevens K."/>
            <person name="Whitehead S."/>
            <person name="Barrell B.G."/>
            <person name="Spratt B.G."/>
            <person name="Parkhill J."/>
        </authorList>
    </citation>
    <scope>NUCLEOTIDE SEQUENCE [LARGE SCALE GENOMIC DNA]</scope>
    <source>
        <strain>MSSA476</strain>
    </source>
</reference>
<feature type="chain" id="PRO_0000193331" description="Demethylmenaquinone methyltransferase">
    <location>
        <begin position="1"/>
        <end position="241"/>
    </location>
</feature>
<feature type="binding site" evidence="1">
    <location>
        <position position="60"/>
    </location>
    <ligand>
        <name>S-adenosyl-L-methionine</name>
        <dbReference type="ChEBI" id="CHEBI:59789"/>
    </ligand>
</feature>
<feature type="binding site" evidence="1">
    <location>
        <position position="81"/>
    </location>
    <ligand>
        <name>S-adenosyl-L-methionine</name>
        <dbReference type="ChEBI" id="CHEBI:59789"/>
    </ligand>
</feature>
<feature type="binding site" evidence="1">
    <location>
        <begin position="106"/>
        <end position="107"/>
    </location>
    <ligand>
        <name>S-adenosyl-L-methionine</name>
        <dbReference type="ChEBI" id="CHEBI:59789"/>
    </ligand>
</feature>
<evidence type="ECO:0000255" key="1">
    <source>
        <dbReference type="HAMAP-Rule" id="MF_01813"/>
    </source>
</evidence>
<name>MENG_STAAS</name>
<dbReference type="EC" id="2.1.1.163" evidence="1"/>
<dbReference type="EMBL" id="BX571857">
    <property type="protein sequence ID" value="CAG43189.1"/>
    <property type="molecule type" value="Genomic_DNA"/>
</dbReference>
<dbReference type="RefSeq" id="WP_000774684.1">
    <property type="nucleotide sequence ID" value="NC_002953.3"/>
</dbReference>
<dbReference type="SMR" id="Q6G992"/>
<dbReference type="KEGG" id="sas:SAS1412"/>
<dbReference type="HOGENOM" id="CLU_037990_0_0_9"/>
<dbReference type="UniPathway" id="UPA00079">
    <property type="reaction ID" value="UER00169"/>
</dbReference>
<dbReference type="GO" id="GO:0043770">
    <property type="term" value="F:demethylmenaquinone methyltransferase activity"/>
    <property type="evidence" value="ECO:0007669"/>
    <property type="project" value="UniProtKB-UniRule"/>
</dbReference>
<dbReference type="GO" id="GO:0009234">
    <property type="term" value="P:menaquinone biosynthetic process"/>
    <property type="evidence" value="ECO:0007669"/>
    <property type="project" value="UniProtKB-UniRule"/>
</dbReference>
<dbReference type="GO" id="GO:0032259">
    <property type="term" value="P:methylation"/>
    <property type="evidence" value="ECO:0007669"/>
    <property type="project" value="UniProtKB-KW"/>
</dbReference>
<dbReference type="CDD" id="cd02440">
    <property type="entry name" value="AdoMet_MTases"/>
    <property type="match status" value="1"/>
</dbReference>
<dbReference type="FunFam" id="3.40.50.150:FF:000086">
    <property type="entry name" value="Demethylmenaquinone methyltransferase"/>
    <property type="match status" value="1"/>
</dbReference>
<dbReference type="Gene3D" id="3.40.50.150">
    <property type="entry name" value="Vaccinia Virus protein VP39"/>
    <property type="match status" value="1"/>
</dbReference>
<dbReference type="HAMAP" id="MF_01813">
    <property type="entry name" value="MenG_UbiE_methyltr"/>
    <property type="match status" value="1"/>
</dbReference>
<dbReference type="InterPro" id="IPR029063">
    <property type="entry name" value="SAM-dependent_MTases_sf"/>
</dbReference>
<dbReference type="InterPro" id="IPR004033">
    <property type="entry name" value="UbiE/COQ5_MeTrFase"/>
</dbReference>
<dbReference type="InterPro" id="IPR023576">
    <property type="entry name" value="UbiE/COQ5_MeTrFase_CS"/>
</dbReference>
<dbReference type="NCBIfam" id="TIGR01934">
    <property type="entry name" value="MenG_MenH_UbiE"/>
    <property type="match status" value="1"/>
</dbReference>
<dbReference type="NCBIfam" id="NF001243">
    <property type="entry name" value="PRK00216.1-4"/>
    <property type="match status" value="1"/>
</dbReference>
<dbReference type="NCBIfam" id="NF001244">
    <property type="entry name" value="PRK00216.1-5"/>
    <property type="match status" value="1"/>
</dbReference>
<dbReference type="PANTHER" id="PTHR43591:SF24">
    <property type="entry name" value="2-METHOXY-6-POLYPRENYL-1,4-BENZOQUINOL METHYLASE, MITOCHONDRIAL"/>
    <property type="match status" value="1"/>
</dbReference>
<dbReference type="PANTHER" id="PTHR43591">
    <property type="entry name" value="METHYLTRANSFERASE"/>
    <property type="match status" value="1"/>
</dbReference>
<dbReference type="Pfam" id="PF01209">
    <property type="entry name" value="Ubie_methyltran"/>
    <property type="match status" value="1"/>
</dbReference>
<dbReference type="SUPFAM" id="SSF53335">
    <property type="entry name" value="S-adenosyl-L-methionine-dependent methyltransferases"/>
    <property type="match status" value="1"/>
</dbReference>
<dbReference type="PROSITE" id="PS51608">
    <property type="entry name" value="SAM_MT_UBIE"/>
    <property type="match status" value="1"/>
</dbReference>
<dbReference type="PROSITE" id="PS01183">
    <property type="entry name" value="UBIE_1"/>
    <property type="match status" value="1"/>
</dbReference>
<dbReference type="PROSITE" id="PS01184">
    <property type="entry name" value="UBIE_2"/>
    <property type="match status" value="1"/>
</dbReference>
<protein>
    <recommendedName>
        <fullName evidence="1">Demethylmenaquinone methyltransferase</fullName>
        <ecNumber evidence="1">2.1.1.163</ecNumber>
    </recommendedName>
</protein>
<gene>
    <name evidence="1" type="primary">menG</name>
    <name type="ordered locus">SAS1412</name>
</gene>
<comment type="function">
    <text evidence="1">Methyltransferase required for the conversion of demethylmenaquinol (DMKH2) to menaquinol (MKH2).</text>
</comment>
<comment type="catalytic activity">
    <reaction evidence="1">
        <text>a 2-demethylmenaquinol + S-adenosyl-L-methionine = a menaquinol + S-adenosyl-L-homocysteine + H(+)</text>
        <dbReference type="Rhea" id="RHEA:42640"/>
        <dbReference type="Rhea" id="RHEA-COMP:9539"/>
        <dbReference type="Rhea" id="RHEA-COMP:9563"/>
        <dbReference type="ChEBI" id="CHEBI:15378"/>
        <dbReference type="ChEBI" id="CHEBI:18151"/>
        <dbReference type="ChEBI" id="CHEBI:55437"/>
        <dbReference type="ChEBI" id="CHEBI:57856"/>
        <dbReference type="ChEBI" id="CHEBI:59789"/>
        <dbReference type="EC" id="2.1.1.163"/>
    </reaction>
</comment>
<comment type="pathway">
    <text evidence="1">Quinol/quinone metabolism; menaquinone biosynthesis; menaquinol from 1,4-dihydroxy-2-naphthoate: step 2/2.</text>
</comment>
<comment type="similarity">
    <text evidence="1">Belongs to the class I-like SAM-binding methyltransferase superfamily. MenG/UbiE family.</text>
</comment>
<keyword id="KW-0474">Menaquinone biosynthesis</keyword>
<keyword id="KW-0489">Methyltransferase</keyword>
<keyword id="KW-0949">S-adenosyl-L-methionine</keyword>
<keyword id="KW-0808">Transferase</keyword>
<organism>
    <name type="scientific">Staphylococcus aureus (strain MSSA476)</name>
    <dbReference type="NCBI Taxonomy" id="282459"/>
    <lineage>
        <taxon>Bacteria</taxon>
        <taxon>Bacillati</taxon>
        <taxon>Bacillota</taxon>
        <taxon>Bacilli</taxon>
        <taxon>Bacillales</taxon>
        <taxon>Staphylococcaceae</taxon>
        <taxon>Staphylococcus</taxon>
    </lineage>
</organism>
<sequence>MADNKANKEQVHRVFQNISKKYDRLNNIISFEQHKVWRKRVMKDMGVRKGTKALDVCCGTGDWTIALSKAVGPTGEVTGIDFSENMLEVGKEKTASMENVKLVHGDAMELPFEDNSFDYVTIGFGLRNVPDYLVALKEMNRVLKPGGMVVCLETSQPTLPVFKQMYALYFKFVMPIFGKLFAKSKEEYEWLQQSTFNFPGKEELKRMFEEAGFINVRVRSFTGGVAAMHLGYKEKDNTKGD</sequence>